<proteinExistence type="inferred from homology"/>
<organism>
    <name type="scientific">Chlorobaculum tepidum (strain ATCC 49652 / DSM 12025 / NBRC 103806 / TLS)</name>
    <name type="common">Chlorobium tepidum</name>
    <dbReference type="NCBI Taxonomy" id="194439"/>
    <lineage>
        <taxon>Bacteria</taxon>
        <taxon>Pseudomonadati</taxon>
        <taxon>Chlorobiota</taxon>
        <taxon>Chlorobiia</taxon>
        <taxon>Chlorobiales</taxon>
        <taxon>Chlorobiaceae</taxon>
        <taxon>Chlorobaculum</taxon>
    </lineage>
</organism>
<keyword id="KW-0067">ATP-binding</keyword>
<keyword id="KW-0143">Chaperone</keyword>
<keyword id="KW-0175">Coiled coil</keyword>
<keyword id="KW-0963">Cytoplasm</keyword>
<keyword id="KW-0547">Nucleotide-binding</keyword>
<keyword id="KW-1185">Reference proteome</keyword>
<keyword id="KW-0346">Stress response</keyword>
<reference key="1">
    <citation type="journal article" date="2002" name="Proc. Natl. Acad. Sci. U.S.A.">
        <title>The complete genome sequence of Chlorobium tepidum TLS, a photosynthetic, anaerobic, green-sulfur bacterium.</title>
        <authorList>
            <person name="Eisen J.A."/>
            <person name="Nelson K.E."/>
            <person name="Paulsen I.T."/>
            <person name="Heidelberg J.F."/>
            <person name="Wu M."/>
            <person name="Dodson R.J."/>
            <person name="DeBoy R.T."/>
            <person name="Gwinn M.L."/>
            <person name="Nelson W.C."/>
            <person name="Haft D.H."/>
            <person name="Hickey E.K."/>
            <person name="Peterson J.D."/>
            <person name="Durkin A.S."/>
            <person name="Kolonay J.F."/>
            <person name="Yang F."/>
            <person name="Holt I.E."/>
            <person name="Umayam L.A."/>
            <person name="Mason T.M."/>
            <person name="Brenner M."/>
            <person name="Shea T.P."/>
            <person name="Parksey D.S."/>
            <person name="Nierman W.C."/>
            <person name="Feldblyum T.V."/>
            <person name="Hansen C.L."/>
            <person name="Craven M.B."/>
            <person name="Radune D."/>
            <person name="Vamathevan J.J."/>
            <person name="Khouri H.M."/>
            <person name="White O."/>
            <person name="Gruber T.M."/>
            <person name="Ketchum K.A."/>
            <person name="Venter J.C."/>
            <person name="Tettelin H."/>
            <person name="Bryant D.A."/>
            <person name="Fraser C.M."/>
        </authorList>
    </citation>
    <scope>NUCLEOTIDE SEQUENCE [LARGE SCALE GENOMIC DNA]</scope>
    <source>
        <strain>ATCC 49652 / DSM 12025 / NBRC 103806 / TLS</strain>
    </source>
</reference>
<dbReference type="EMBL" id="AE006470">
    <property type="protein sequence ID" value="AAM71337.1"/>
    <property type="molecule type" value="Genomic_DNA"/>
</dbReference>
<dbReference type="RefSeq" id="NP_660995.1">
    <property type="nucleotide sequence ID" value="NC_002932.3"/>
</dbReference>
<dbReference type="RefSeq" id="WP_010931783.1">
    <property type="nucleotide sequence ID" value="NC_002932.3"/>
</dbReference>
<dbReference type="SMR" id="Q8KG79"/>
<dbReference type="STRING" id="194439.CT0089"/>
<dbReference type="EnsemblBacteria" id="AAM71337">
    <property type="protein sequence ID" value="AAM71337"/>
    <property type="gene ID" value="CT0089"/>
</dbReference>
<dbReference type="KEGG" id="cte:CT0089"/>
<dbReference type="PATRIC" id="fig|194439.7.peg.89"/>
<dbReference type="eggNOG" id="COG0542">
    <property type="taxonomic scope" value="Bacteria"/>
</dbReference>
<dbReference type="HOGENOM" id="CLU_005070_9_1_10"/>
<dbReference type="OrthoDB" id="9803641at2"/>
<dbReference type="Proteomes" id="UP000001007">
    <property type="component" value="Chromosome"/>
</dbReference>
<dbReference type="GO" id="GO:0005737">
    <property type="term" value="C:cytoplasm"/>
    <property type="evidence" value="ECO:0007669"/>
    <property type="project" value="UniProtKB-SubCell"/>
</dbReference>
<dbReference type="GO" id="GO:0005524">
    <property type="term" value="F:ATP binding"/>
    <property type="evidence" value="ECO:0007669"/>
    <property type="project" value="UniProtKB-KW"/>
</dbReference>
<dbReference type="GO" id="GO:0016887">
    <property type="term" value="F:ATP hydrolysis activity"/>
    <property type="evidence" value="ECO:0007669"/>
    <property type="project" value="InterPro"/>
</dbReference>
<dbReference type="GO" id="GO:0034605">
    <property type="term" value="P:cellular response to heat"/>
    <property type="evidence" value="ECO:0007669"/>
    <property type="project" value="TreeGrafter"/>
</dbReference>
<dbReference type="CDD" id="cd19499">
    <property type="entry name" value="RecA-like_ClpB_Hsp104-like"/>
    <property type="match status" value="1"/>
</dbReference>
<dbReference type="FunFam" id="3.40.50.300:FF:000025">
    <property type="entry name" value="ATP-dependent Clp protease subunit"/>
    <property type="match status" value="1"/>
</dbReference>
<dbReference type="Gene3D" id="1.10.8.60">
    <property type="match status" value="1"/>
</dbReference>
<dbReference type="Gene3D" id="6.10.140.130">
    <property type="match status" value="1"/>
</dbReference>
<dbReference type="Gene3D" id="3.40.50.300">
    <property type="entry name" value="P-loop containing nucleotide triphosphate hydrolases"/>
    <property type="match status" value="1"/>
</dbReference>
<dbReference type="InterPro" id="IPR003593">
    <property type="entry name" value="AAA+_ATPase"/>
</dbReference>
<dbReference type="InterPro" id="IPR003959">
    <property type="entry name" value="ATPase_AAA_core"/>
</dbReference>
<dbReference type="InterPro" id="IPR019489">
    <property type="entry name" value="Clp_ATPase_C"/>
</dbReference>
<dbReference type="InterPro" id="IPR001270">
    <property type="entry name" value="ClpA/B"/>
</dbReference>
<dbReference type="InterPro" id="IPR028299">
    <property type="entry name" value="ClpA/B_CS2"/>
</dbReference>
<dbReference type="InterPro" id="IPR050130">
    <property type="entry name" value="ClpA_ClpB"/>
</dbReference>
<dbReference type="InterPro" id="IPR027417">
    <property type="entry name" value="P-loop_NTPase"/>
</dbReference>
<dbReference type="PANTHER" id="PTHR11638">
    <property type="entry name" value="ATP-DEPENDENT CLP PROTEASE"/>
    <property type="match status" value="1"/>
</dbReference>
<dbReference type="PANTHER" id="PTHR11638:SF18">
    <property type="entry name" value="HEAT SHOCK PROTEIN 104"/>
    <property type="match status" value="1"/>
</dbReference>
<dbReference type="Pfam" id="PF07724">
    <property type="entry name" value="AAA_2"/>
    <property type="match status" value="1"/>
</dbReference>
<dbReference type="Pfam" id="PF10431">
    <property type="entry name" value="ClpB_D2-small"/>
    <property type="match status" value="1"/>
</dbReference>
<dbReference type="PRINTS" id="PR00300">
    <property type="entry name" value="CLPPROTEASEA"/>
</dbReference>
<dbReference type="SMART" id="SM00382">
    <property type="entry name" value="AAA"/>
    <property type="match status" value="1"/>
</dbReference>
<dbReference type="SMART" id="SM01086">
    <property type="entry name" value="ClpB_D2-small"/>
    <property type="match status" value="1"/>
</dbReference>
<dbReference type="SUPFAM" id="SSF52540">
    <property type="entry name" value="P-loop containing nucleoside triphosphate hydrolases"/>
    <property type="match status" value="2"/>
</dbReference>
<dbReference type="PROSITE" id="PS00871">
    <property type="entry name" value="CLPAB_2"/>
    <property type="match status" value="1"/>
</dbReference>
<sequence length="438" mass="49655">MNTADTRQRLLDIEKQIASLREEQATVKAQWEAEKELIHTSRRLKEELEDLRVQAENYERSGDYGKVAEIRYGKIAEIEKALEENNRKIEARQASGDLIMKEEIDAGDIADIVSRWTGIPVSKMLQSERQKLLGIESELHRRVVGQDEAVRAVSDAVKRSRAGMGDEKRPIGSFIFLGPTGVGKTELARTLAEYLFDDEDALIRIDMSEYMEAHTVSRLVGAPPGYVGYEEGGQLTEAVRRKPFSVVLLDEIEKAHPDVFNILLQILDDGRLTDSKGRTVNFKNTIIIMTSNIGAQLIQSEMEHLEGRDADAALAGLKEKLFQLLKQQVRPEFLNRIDEVILFTPLTRENLREIVTIQFNRIKETARRQRITLEISDEALMWLAKTGFDPAFGARPLKRVMQRQITNRLSEMILAGQVGEDDTVEIGLENDAIVMKKK</sequence>
<accession>Q8KG79</accession>
<evidence type="ECO:0000250" key="1"/>
<evidence type="ECO:0000255" key="2"/>
<evidence type="ECO:0000305" key="3"/>
<gene>
    <name type="primary">clpB1</name>
    <name type="ordered locus">CT0089</name>
</gene>
<name>CLPB1_CHLTE</name>
<comment type="function">
    <text evidence="1">Part of a stress-induced multi-chaperone system, it is involved in the recovery of the cell from heat-induced damage, in cooperation with DnaK, DnaJ and GrpE. Acts before DnaK, in the processing of protein aggregates. Protein binding stimulates the ATPase activity; ATP hydrolysis unfolds the denatured protein aggregates, which probably helps expose new hydrophobic binding sites on the surface of ClpB-bound aggregates, contributing to the solubilization and refolding of denatured protein aggregates by DnaK (By similarity).</text>
</comment>
<comment type="subunit">
    <text evidence="1">Homohexamer. The oligomerization is ATP-dependent (By similarity).</text>
</comment>
<comment type="subcellular location">
    <subcellularLocation>
        <location evidence="3">Cytoplasm</location>
    </subcellularLocation>
</comment>
<comment type="domain">
    <text evidence="1">The N-terminal domain probably functions as a substrate-discriminating domain, recruiting aggregated proteins to the ClpB hexamer and/or stabilizing bound proteins. The NBD2 domain is responsible for oligomerization, whereas the NBD1 domain stabilizes the hexamer probably in an ATP-dependent manner. The movement of the coiled-coil domain is essential for ClpB ability to rescue proteins from an aggregated state, probably by pulling apart large aggregated proteins, which are bound between the coiled-coils motifs of adjacent ClpB subunits in the functional hexamer (By similarity).</text>
</comment>
<comment type="similarity">
    <text evidence="3">Belongs to the ClpA/ClpB family.</text>
</comment>
<comment type="caution">
    <text evidence="3">This protein is much smaller than the orthologs present in other bacteria; the N-terminal and NBD1 domains are missing. However, there is a paralog in the genome (clpB2) that encodes a protein which contains only the N-terminal and NBD1 domains.</text>
</comment>
<protein>
    <recommendedName>
        <fullName>Probable chaperone protein ClpB 1</fullName>
    </recommendedName>
</protein>
<feature type="chain" id="PRO_0000191107" description="Probable chaperone protein ClpB 1">
    <location>
        <begin position="1"/>
        <end position="438"/>
    </location>
</feature>
<feature type="region of interest" description="Linker" evidence="1">
    <location>
        <begin position="1"/>
        <end position="118"/>
    </location>
</feature>
<feature type="region of interest" description="NBD2" evidence="1">
    <location>
        <begin position="128"/>
        <end position="345"/>
    </location>
</feature>
<feature type="region of interest" description="C-terminal" evidence="1">
    <location>
        <begin position="346"/>
        <end position="438"/>
    </location>
</feature>
<feature type="coiled-coil region" evidence="1">
    <location>
        <begin position="1"/>
        <end position="94"/>
    </location>
</feature>
<feature type="binding site" evidence="2">
    <location>
        <begin position="178"/>
        <end position="185"/>
    </location>
    <ligand>
        <name>ATP</name>
        <dbReference type="ChEBI" id="CHEBI:30616"/>
    </ligand>
</feature>